<organism>
    <name type="scientific">Parvibaculum lavamentivorans (strain DS-1 / DSM 13023 / NCIMB 13966)</name>
    <dbReference type="NCBI Taxonomy" id="402881"/>
    <lineage>
        <taxon>Bacteria</taxon>
        <taxon>Pseudomonadati</taxon>
        <taxon>Pseudomonadota</taxon>
        <taxon>Alphaproteobacteria</taxon>
        <taxon>Hyphomicrobiales</taxon>
        <taxon>Parvibaculaceae</taxon>
        <taxon>Parvibaculum</taxon>
    </lineage>
</organism>
<name>APAG_PARL1</name>
<feature type="chain" id="PRO_1000083630" description="Protein ApaG">
    <location>
        <begin position="1"/>
        <end position="130"/>
    </location>
</feature>
<feature type="domain" description="ApaG" evidence="1">
    <location>
        <begin position="3"/>
        <end position="127"/>
    </location>
</feature>
<proteinExistence type="inferred from homology"/>
<accession>A7HQ48</accession>
<dbReference type="EMBL" id="CP000774">
    <property type="protein sequence ID" value="ABS62031.1"/>
    <property type="molecule type" value="Genomic_DNA"/>
</dbReference>
<dbReference type="RefSeq" id="WP_011995322.1">
    <property type="nucleotide sequence ID" value="NC_009719.1"/>
</dbReference>
<dbReference type="SMR" id="A7HQ48"/>
<dbReference type="STRING" id="402881.Plav_0408"/>
<dbReference type="KEGG" id="pla:Plav_0408"/>
<dbReference type="eggNOG" id="COG2967">
    <property type="taxonomic scope" value="Bacteria"/>
</dbReference>
<dbReference type="HOGENOM" id="CLU_128074_1_0_5"/>
<dbReference type="OrthoDB" id="9795226at2"/>
<dbReference type="Proteomes" id="UP000006377">
    <property type="component" value="Chromosome"/>
</dbReference>
<dbReference type="GO" id="GO:0070987">
    <property type="term" value="P:error-free translesion synthesis"/>
    <property type="evidence" value="ECO:0007669"/>
    <property type="project" value="TreeGrafter"/>
</dbReference>
<dbReference type="Gene3D" id="2.60.40.1470">
    <property type="entry name" value="ApaG domain"/>
    <property type="match status" value="1"/>
</dbReference>
<dbReference type="HAMAP" id="MF_00791">
    <property type="entry name" value="ApaG"/>
    <property type="match status" value="1"/>
</dbReference>
<dbReference type="InterPro" id="IPR007474">
    <property type="entry name" value="ApaG_domain"/>
</dbReference>
<dbReference type="InterPro" id="IPR036767">
    <property type="entry name" value="ApaG_sf"/>
</dbReference>
<dbReference type="InterPro" id="IPR023065">
    <property type="entry name" value="Uncharacterised_ApaG"/>
</dbReference>
<dbReference type="NCBIfam" id="NF003967">
    <property type="entry name" value="PRK05461.1"/>
    <property type="match status" value="1"/>
</dbReference>
<dbReference type="PANTHER" id="PTHR14289">
    <property type="entry name" value="F-BOX ONLY PROTEIN 3"/>
    <property type="match status" value="1"/>
</dbReference>
<dbReference type="PANTHER" id="PTHR14289:SF16">
    <property type="entry name" value="POLYMERASE DELTA-INTERACTING PROTEIN 2"/>
    <property type="match status" value="1"/>
</dbReference>
<dbReference type="Pfam" id="PF04379">
    <property type="entry name" value="DUF525"/>
    <property type="match status" value="1"/>
</dbReference>
<dbReference type="SUPFAM" id="SSF110069">
    <property type="entry name" value="ApaG-like"/>
    <property type="match status" value="1"/>
</dbReference>
<dbReference type="PROSITE" id="PS51087">
    <property type="entry name" value="APAG"/>
    <property type="match status" value="1"/>
</dbReference>
<evidence type="ECO:0000255" key="1">
    <source>
        <dbReference type="HAMAP-Rule" id="MF_00791"/>
    </source>
</evidence>
<reference key="1">
    <citation type="journal article" date="2011" name="Stand. Genomic Sci.">
        <title>Complete genome sequence of Parvibaculum lavamentivorans type strain (DS-1(T)).</title>
        <authorList>
            <person name="Schleheck D."/>
            <person name="Weiss M."/>
            <person name="Pitluck S."/>
            <person name="Bruce D."/>
            <person name="Land M.L."/>
            <person name="Han S."/>
            <person name="Saunders E."/>
            <person name="Tapia R."/>
            <person name="Detter C."/>
            <person name="Brettin T."/>
            <person name="Han J."/>
            <person name="Woyke T."/>
            <person name="Goodwin L."/>
            <person name="Pennacchio L."/>
            <person name="Nolan M."/>
            <person name="Cook A.M."/>
            <person name="Kjelleberg S."/>
            <person name="Thomas T."/>
        </authorList>
    </citation>
    <scope>NUCLEOTIDE SEQUENCE [LARGE SCALE GENOMIC DNA]</scope>
    <source>
        <strain>DS-1 / DSM 13023 / NCIMB 13966</strain>
    </source>
</reference>
<gene>
    <name evidence="1" type="primary">apaG</name>
    <name type="ordered locus">Plav_0408</name>
</gene>
<sequence length="130" mass="14749">MYSAMTRSINILVEPTYLEDQSEPDQDYYVWAYHVTIENKGPETVRLRARYWKITDATGHVHEVRGPGVVGEQPLLRPGEKFEYTSGTPLGAPSGIMFGNYEMETAEGEKFEVDIPAFSLDSPHAKRMLH</sequence>
<protein>
    <recommendedName>
        <fullName evidence="1">Protein ApaG</fullName>
    </recommendedName>
</protein>
<keyword id="KW-1185">Reference proteome</keyword>